<reference key="1">
    <citation type="submission" date="2007-03" db="EMBL/GenBank/DDBJ databases">
        <title>Genome sequence of Rhodospirillum centenum.</title>
        <authorList>
            <person name="Touchman J.W."/>
            <person name="Bauer C."/>
            <person name="Blankenship R.E."/>
        </authorList>
    </citation>
    <scope>NUCLEOTIDE SEQUENCE [LARGE SCALE GENOMIC DNA]</scope>
    <source>
        <strain>ATCC 51521 / SW</strain>
    </source>
</reference>
<proteinExistence type="inferred from homology"/>
<organism>
    <name type="scientific">Rhodospirillum centenum (strain ATCC 51521 / SW)</name>
    <dbReference type="NCBI Taxonomy" id="414684"/>
    <lineage>
        <taxon>Bacteria</taxon>
        <taxon>Pseudomonadati</taxon>
        <taxon>Pseudomonadota</taxon>
        <taxon>Alphaproteobacteria</taxon>
        <taxon>Rhodospirillales</taxon>
        <taxon>Rhodospirillaceae</taxon>
        <taxon>Rhodospirillum</taxon>
    </lineage>
</organism>
<feature type="chain" id="PRO_1000096006" description="Phosphoribosylaminoimidazole-succinocarboxamide synthase">
    <location>
        <begin position="1"/>
        <end position="254"/>
    </location>
</feature>
<gene>
    <name evidence="1" type="primary">purC</name>
    <name type="ordered locus">RC1_3360</name>
</gene>
<accession>B6IWP6</accession>
<dbReference type="EC" id="6.3.2.6" evidence="1"/>
<dbReference type="EMBL" id="CP000613">
    <property type="protein sequence ID" value="ACJ00720.1"/>
    <property type="molecule type" value="Genomic_DNA"/>
</dbReference>
<dbReference type="RefSeq" id="WP_012568498.1">
    <property type="nucleotide sequence ID" value="NC_011420.2"/>
</dbReference>
<dbReference type="SMR" id="B6IWP6"/>
<dbReference type="STRING" id="414684.RC1_3360"/>
<dbReference type="KEGG" id="rce:RC1_3360"/>
<dbReference type="eggNOG" id="COG0152">
    <property type="taxonomic scope" value="Bacteria"/>
</dbReference>
<dbReference type="HOGENOM" id="CLU_061495_2_0_5"/>
<dbReference type="OrthoDB" id="9801549at2"/>
<dbReference type="UniPathway" id="UPA00074">
    <property type="reaction ID" value="UER00131"/>
</dbReference>
<dbReference type="Proteomes" id="UP000001591">
    <property type="component" value="Chromosome"/>
</dbReference>
<dbReference type="GO" id="GO:0005829">
    <property type="term" value="C:cytosol"/>
    <property type="evidence" value="ECO:0007669"/>
    <property type="project" value="TreeGrafter"/>
</dbReference>
<dbReference type="GO" id="GO:0005524">
    <property type="term" value="F:ATP binding"/>
    <property type="evidence" value="ECO:0007669"/>
    <property type="project" value="UniProtKB-KW"/>
</dbReference>
<dbReference type="GO" id="GO:0004639">
    <property type="term" value="F:phosphoribosylaminoimidazolesuccinocarboxamide synthase activity"/>
    <property type="evidence" value="ECO:0007669"/>
    <property type="project" value="UniProtKB-UniRule"/>
</dbReference>
<dbReference type="GO" id="GO:0006189">
    <property type="term" value="P:'de novo' IMP biosynthetic process"/>
    <property type="evidence" value="ECO:0007669"/>
    <property type="project" value="UniProtKB-UniRule"/>
</dbReference>
<dbReference type="GO" id="GO:0009236">
    <property type="term" value="P:cobalamin biosynthetic process"/>
    <property type="evidence" value="ECO:0007669"/>
    <property type="project" value="InterPro"/>
</dbReference>
<dbReference type="CDD" id="cd01415">
    <property type="entry name" value="SAICAR_synt_PurC"/>
    <property type="match status" value="1"/>
</dbReference>
<dbReference type="FunFam" id="3.30.470.20:FF:000006">
    <property type="entry name" value="Phosphoribosylaminoimidazole-succinocarboxamide synthase"/>
    <property type="match status" value="1"/>
</dbReference>
<dbReference type="Gene3D" id="3.30.470.20">
    <property type="entry name" value="ATP-grasp fold, B domain"/>
    <property type="match status" value="1"/>
</dbReference>
<dbReference type="Gene3D" id="3.30.200.20">
    <property type="entry name" value="Phosphorylase Kinase, domain 1"/>
    <property type="match status" value="1"/>
</dbReference>
<dbReference type="HAMAP" id="MF_00137">
    <property type="entry name" value="SAICAR_synth"/>
    <property type="match status" value="1"/>
</dbReference>
<dbReference type="InterPro" id="IPR028923">
    <property type="entry name" value="SAICAR_synt/ADE2_N"/>
</dbReference>
<dbReference type="InterPro" id="IPR033934">
    <property type="entry name" value="SAICAR_synt_PurC"/>
</dbReference>
<dbReference type="InterPro" id="IPR001636">
    <property type="entry name" value="SAICAR_synth"/>
</dbReference>
<dbReference type="InterPro" id="IPR050089">
    <property type="entry name" value="SAICAR_synthetase"/>
</dbReference>
<dbReference type="InterPro" id="IPR018236">
    <property type="entry name" value="SAICAR_synthetase_CS"/>
</dbReference>
<dbReference type="NCBIfam" id="TIGR00081">
    <property type="entry name" value="purC"/>
    <property type="match status" value="1"/>
</dbReference>
<dbReference type="PANTHER" id="PTHR43599">
    <property type="entry name" value="MULTIFUNCTIONAL PROTEIN ADE2"/>
    <property type="match status" value="1"/>
</dbReference>
<dbReference type="PANTHER" id="PTHR43599:SF3">
    <property type="entry name" value="SI:DKEY-6E2.2"/>
    <property type="match status" value="1"/>
</dbReference>
<dbReference type="Pfam" id="PF01259">
    <property type="entry name" value="SAICAR_synt"/>
    <property type="match status" value="1"/>
</dbReference>
<dbReference type="SUPFAM" id="SSF56104">
    <property type="entry name" value="SAICAR synthase-like"/>
    <property type="match status" value="1"/>
</dbReference>
<dbReference type="PROSITE" id="PS01057">
    <property type="entry name" value="SAICAR_SYNTHETASE_1"/>
    <property type="match status" value="1"/>
</dbReference>
<keyword id="KW-0067">ATP-binding</keyword>
<keyword id="KW-0436">Ligase</keyword>
<keyword id="KW-0547">Nucleotide-binding</keyword>
<keyword id="KW-0658">Purine biosynthesis</keyword>
<keyword id="KW-1185">Reference proteome</keyword>
<comment type="catalytic activity">
    <reaction evidence="1">
        <text>5-amino-1-(5-phospho-D-ribosyl)imidazole-4-carboxylate + L-aspartate + ATP = (2S)-2-[5-amino-1-(5-phospho-beta-D-ribosyl)imidazole-4-carboxamido]succinate + ADP + phosphate + 2 H(+)</text>
        <dbReference type="Rhea" id="RHEA:22628"/>
        <dbReference type="ChEBI" id="CHEBI:15378"/>
        <dbReference type="ChEBI" id="CHEBI:29991"/>
        <dbReference type="ChEBI" id="CHEBI:30616"/>
        <dbReference type="ChEBI" id="CHEBI:43474"/>
        <dbReference type="ChEBI" id="CHEBI:58443"/>
        <dbReference type="ChEBI" id="CHEBI:77657"/>
        <dbReference type="ChEBI" id="CHEBI:456216"/>
        <dbReference type="EC" id="6.3.2.6"/>
    </reaction>
</comment>
<comment type="pathway">
    <text evidence="1">Purine metabolism; IMP biosynthesis via de novo pathway; 5-amino-1-(5-phospho-D-ribosyl)imidazole-4-carboxamide from 5-amino-1-(5-phospho-D-ribosyl)imidazole-4-carboxylate: step 1/2.</text>
</comment>
<comment type="similarity">
    <text evidence="1">Belongs to the SAICAR synthetase family.</text>
</comment>
<sequence length="254" mass="28929">MTRRRRIYEGKAKILFEGPEPGTLVQYFKDDATAFNAQKKGVITGKGVLNNRISEYLMMKLGEIGIPTHFVRRLNMREQLIREVEIIPIEVVVRNVAAGSLTKRFGIPEGTQLPRSIVEYYFKNDELGDPMVSEEHITAFGWAAPQDLDDMLALALRVNDYLSGLFLGIGLRLVDFKVEFGRLWENEEMRIILADEISPDNCRLWDVKTNEKLDKDRFRQDLGNVAEAYQEVAKRLGIMPEAGPGDMKAPKLVQ</sequence>
<protein>
    <recommendedName>
        <fullName evidence="1">Phosphoribosylaminoimidazole-succinocarboxamide synthase</fullName>
        <ecNumber evidence="1">6.3.2.6</ecNumber>
    </recommendedName>
    <alternativeName>
        <fullName evidence="1">SAICAR synthetase</fullName>
    </alternativeName>
</protein>
<name>PUR7_RHOCS</name>
<evidence type="ECO:0000255" key="1">
    <source>
        <dbReference type="HAMAP-Rule" id="MF_00137"/>
    </source>
</evidence>